<comment type="function">
    <text evidence="1">Endonuclease that resolves Holliday junction intermediates made during homologous genetic recombination and DNA repair. Exhibits sequence and structure-selective cleavage of four-way DNA junctions, where it introduces symmetrical nicks in two strands of the same polarity at the 5' side of CC dinucleotides. Corrects the defects in genetic recombination and DNA repair associated with inactivation of RuvAB or RuvC (By similarity).</text>
</comment>
<comment type="catalytic activity">
    <reaction>
        <text>Endonucleolytic cleavage at a junction such as a reciprocal single-stranded crossover between two homologous DNA duplexes (Holliday junction).</text>
        <dbReference type="EC" id="3.1.21.10"/>
    </reaction>
</comment>
<comment type="cofactor">
    <cofactor evidence="1">
        <name>Mg(2+)</name>
        <dbReference type="ChEBI" id="CHEBI:18420"/>
    </cofactor>
    <text evidence="1">Binds 1 Mg(2+) ion per subunit.</text>
</comment>
<comment type="subunit">
    <text evidence="1">Homodimer.</text>
</comment>
<comment type="similarity">
    <text evidence="2">Belongs to the RusA family.</text>
</comment>
<protein>
    <recommendedName>
        <fullName>Crossover junction endodeoxyribonuclease RusA</fullName>
        <ecNumber>3.1.21.10</ecNumber>
    </recommendedName>
    <alternativeName>
        <fullName>Holliday junction nuclease RusA</fullName>
    </alternativeName>
    <alternativeName>
        <fullName>Holliday junction resolvase</fullName>
    </alternativeName>
</protein>
<sequence>MNTYSITLPWPPSNNRYYRHNRGRTHVSAEGQAYRDNVARIIKNAMLDIGLAMPVKIRIECHMPDRRRRDLDNLQKAAFDALTKAGFWLDDAQVVDYRVVKMPVTKGGRLELTITEMGNE</sequence>
<gene>
    <name type="primary">rusA</name>
    <name type="ordered locus">UTI89_C1298</name>
</gene>
<reference key="1">
    <citation type="journal article" date="2006" name="Proc. Natl. Acad. Sci. U.S.A.">
        <title>Identification of genes subject to positive selection in uropathogenic strains of Escherichia coli: a comparative genomics approach.</title>
        <authorList>
            <person name="Chen S.L."/>
            <person name="Hung C.-S."/>
            <person name="Xu J."/>
            <person name="Reigstad C.S."/>
            <person name="Magrini V."/>
            <person name="Sabo A."/>
            <person name="Blasiar D."/>
            <person name="Bieri T."/>
            <person name="Meyer R.R."/>
            <person name="Ozersky P."/>
            <person name="Armstrong J.R."/>
            <person name="Fulton R.S."/>
            <person name="Latreille J.P."/>
            <person name="Spieth J."/>
            <person name="Hooton T.M."/>
            <person name="Mardis E.R."/>
            <person name="Hultgren S.J."/>
            <person name="Gordon J.I."/>
        </authorList>
    </citation>
    <scope>NUCLEOTIDE SEQUENCE [LARGE SCALE GENOMIC DNA]</scope>
    <source>
        <strain>UTI89 / UPEC</strain>
    </source>
</reference>
<organism>
    <name type="scientific">Escherichia coli (strain UTI89 / UPEC)</name>
    <dbReference type="NCBI Taxonomy" id="364106"/>
    <lineage>
        <taxon>Bacteria</taxon>
        <taxon>Pseudomonadati</taxon>
        <taxon>Pseudomonadota</taxon>
        <taxon>Gammaproteobacteria</taxon>
        <taxon>Enterobacterales</taxon>
        <taxon>Enterobacteriaceae</taxon>
        <taxon>Escherichia</taxon>
    </lineage>
</organism>
<name>RUSA_ECOUT</name>
<accession>Q1RCY4</accession>
<feature type="chain" id="PRO_0000324833" description="Crossover junction endodeoxyribonuclease RusA">
    <location>
        <begin position="1"/>
        <end position="120"/>
    </location>
</feature>
<feature type="region of interest" description="DNA-binding" evidence="1">
    <location>
        <begin position="13"/>
        <end position="16"/>
    </location>
</feature>
<feature type="region of interest" description="DNA-binding" evidence="1">
    <location>
        <begin position="66"/>
        <end position="73"/>
    </location>
</feature>
<feature type="binding site" evidence="1">
    <location>
        <position position="70"/>
    </location>
    <ligand>
        <name>Mg(2+)</name>
        <dbReference type="ChEBI" id="CHEBI:18420"/>
    </ligand>
</feature>
<feature type="binding site" evidence="1">
    <location>
        <position position="72"/>
    </location>
    <ligand>
        <name>Mg(2+)</name>
        <dbReference type="ChEBI" id="CHEBI:18420"/>
    </ligand>
</feature>
<feature type="binding site" evidence="1">
    <location>
        <position position="91"/>
    </location>
    <ligand>
        <name>Mg(2+)</name>
        <dbReference type="ChEBI" id="CHEBI:18420"/>
    </ligand>
</feature>
<keyword id="KW-0227">DNA damage</keyword>
<keyword id="KW-0233">DNA recombination</keyword>
<keyword id="KW-0234">DNA repair</keyword>
<keyword id="KW-0255">Endonuclease</keyword>
<keyword id="KW-0378">Hydrolase</keyword>
<keyword id="KW-0460">Magnesium</keyword>
<keyword id="KW-0479">Metal-binding</keyword>
<keyword id="KW-0540">Nuclease</keyword>
<evidence type="ECO:0000250" key="1"/>
<evidence type="ECO:0000305" key="2"/>
<dbReference type="EC" id="3.1.21.10"/>
<dbReference type="EMBL" id="CP000243">
    <property type="protein sequence ID" value="ABE06780.1"/>
    <property type="molecule type" value="Genomic_DNA"/>
</dbReference>
<dbReference type="RefSeq" id="WP_001099712.1">
    <property type="nucleotide sequence ID" value="NZ_CP064825.1"/>
</dbReference>
<dbReference type="SMR" id="Q1RCY4"/>
<dbReference type="KEGG" id="eci:UTI89_C1298"/>
<dbReference type="HOGENOM" id="CLU_139466_0_2_6"/>
<dbReference type="Proteomes" id="UP000001952">
    <property type="component" value="Chromosome"/>
</dbReference>
<dbReference type="GO" id="GO:0008821">
    <property type="term" value="F:crossover junction DNA endonuclease activity"/>
    <property type="evidence" value="ECO:0007669"/>
    <property type="project" value="InterPro"/>
</dbReference>
<dbReference type="GO" id="GO:0000287">
    <property type="term" value="F:magnesium ion binding"/>
    <property type="evidence" value="ECO:0007669"/>
    <property type="project" value="InterPro"/>
</dbReference>
<dbReference type="GO" id="GO:0006310">
    <property type="term" value="P:DNA recombination"/>
    <property type="evidence" value="ECO:0007669"/>
    <property type="project" value="UniProtKB-KW"/>
</dbReference>
<dbReference type="GO" id="GO:0006281">
    <property type="term" value="P:DNA repair"/>
    <property type="evidence" value="ECO:0007669"/>
    <property type="project" value="UniProtKB-KW"/>
</dbReference>
<dbReference type="FunFam" id="3.30.1330.70:FF:000001">
    <property type="entry name" value="Crossover junction endodeoxyribonuclease RusA"/>
    <property type="match status" value="1"/>
</dbReference>
<dbReference type="Gene3D" id="3.30.1330.70">
    <property type="entry name" value="Holliday junction resolvase RusA"/>
    <property type="match status" value="1"/>
</dbReference>
<dbReference type="InterPro" id="IPR016281">
    <property type="entry name" value="Endonuclease_RusA"/>
</dbReference>
<dbReference type="InterPro" id="IPR008822">
    <property type="entry name" value="Endonuclease_RusA-like"/>
</dbReference>
<dbReference type="InterPro" id="IPR036614">
    <property type="entry name" value="RusA-like_sf"/>
</dbReference>
<dbReference type="NCBIfam" id="NF007305">
    <property type="entry name" value="PRK09786.1"/>
    <property type="match status" value="1"/>
</dbReference>
<dbReference type="Pfam" id="PF05866">
    <property type="entry name" value="RusA"/>
    <property type="match status" value="1"/>
</dbReference>
<dbReference type="PIRSF" id="PIRSF001007">
    <property type="entry name" value="RusA"/>
    <property type="match status" value="1"/>
</dbReference>
<dbReference type="SUPFAM" id="SSF103084">
    <property type="entry name" value="Holliday junction resolvase RusA"/>
    <property type="match status" value="1"/>
</dbReference>
<proteinExistence type="inferred from homology"/>